<keyword id="KW-0175">Coiled coil</keyword>
<keyword id="KW-1185">Reference proteome</keyword>
<organism>
    <name type="scientific">Rattus norvegicus</name>
    <name type="common">Rat</name>
    <dbReference type="NCBI Taxonomy" id="10116"/>
    <lineage>
        <taxon>Eukaryota</taxon>
        <taxon>Metazoa</taxon>
        <taxon>Chordata</taxon>
        <taxon>Craniata</taxon>
        <taxon>Vertebrata</taxon>
        <taxon>Euteleostomi</taxon>
        <taxon>Mammalia</taxon>
        <taxon>Eutheria</taxon>
        <taxon>Euarchontoglires</taxon>
        <taxon>Glires</taxon>
        <taxon>Rodentia</taxon>
        <taxon>Myomorpha</taxon>
        <taxon>Muroidea</taxon>
        <taxon>Muridae</taxon>
        <taxon>Murinae</taxon>
        <taxon>Rattus</taxon>
    </lineage>
</organism>
<gene>
    <name type="primary">Hsbp1l1</name>
</gene>
<protein>
    <recommendedName>
        <fullName>Heat shock factor-binding protein 1-like protein 1</fullName>
    </recommendedName>
</protein>
<dbReference type="EMBL" id="CH474021">
    <property type="protein sequence ID" value="EDL75229.1"/>
    <property type="molecule type" value="Genomic_DNA"/>
</dbReference>
<dbReference type="RefSeq" id="NP_001129655.1">
    <property type="nucleotide sequence ID" value="NM_001136183.1"/>
</dbReference>
<dbReference type="FunCoup" id="D4A9E1">
    <property type="interactions" value="5"/>
</dbReference>
<dbReference type="STRING" id="10116.ENSRNOP00000071103"/>
<dbReference type="PhosphoSitePlus" id="D4A9E1"/>
<dbReference type="PaxDb" id="10116-ENSRNOP00000061360"/>
<dbReference type="Ensembl" id="ENSRNOT00000078797.2">
    <property type="protein sequence ID" value="ENSRNOP00000071103.1"/>
    <property type="gene ID" value="ENSRNOG00000059055.2"/>
</dbReference>
<dbReference type="GeneID" id="100192205"/>
<dbReference type="KEGG" id="rno:100192205"/>
<dbReference type="AGR" id="RGD:2301798"/>
<dbReference type="CTD" id="440498"/>
<dbReference type="RGD" id="2301798">
    <property type="gene designation" value="Hsbp1l1"/>
</dbReference>
<dbReference type="eggNOG" id="ENOG502SE6P">
    <property type="taxonomic scope" value="Eukaryota"/>
</dbReference>
<dbReference type="GeneTree" id="ENSGT00550000076117"/>
<dbReference type="HOGENOM" id="CLU_149552_4_0_1"/>
<dbReference type="InParanoid" id="D4A9E1"/>
<dbReference type="OMA" id="MEEMGHR"/>
<dbReference type="OrthoDB" id="4159489at2759"/>
<dbReference type="PhylomeDB" id="D4A9E1"/>
<dbReference type="PRO" id="PR:D4A9E1"/>
<dbReference type="Proteomes" id="UP000002494">
    <property type="component" value="Chromosome 18"/>
</dbReference>
<dbReference type="Proteomes" id="UP000234681">
    <property type="component" value="Chromosome 18"/>
</dbReference>
<dbReference type="Bgee" id="ENSRNOG00000059055">
    <property type="expression patterns" value="Expressed in esophagus and 19 other cell types or tissues"/>
</dbReference>
<dbReference type="GO" id="GO:0005829">
    <property type="term" value="C:cytosol"/>
    <property type="evidence" value="ECO:0000318"/>
    <property type="project" value="GO_Central"/>
</dbReference>
<dbReference type="GO" id="GO:0005634">
    <property type="term" value="C:nucleus"/>
    <property type="evidence" value="ECO:0000318"/>
    <property type="project" value="GO_Central"/>
</dbReference>
<dbReference type="GO" id="GO:0003714">
    <property type="term" value="F:transcription corepressor activity"/>
    <property type="evidence" value="ECO:0007669"/>
    <property type="project" value="InterPro"/>
</dbReference>
<dbReference type="GO" id="GO:0070370">
    <property type="term" value="P:cellular heat acclimation"/>
    <property type="evidence" value="ECO:0000318"/>
    <property type="project" value="GO_Central"/>
</dbReference>
<dbReference type="FunFam" id="1.20.5.430:FF:000004">
    <property type="entry name" value="heat shock factor-binding protein 1-like protein 1"/>
    <property type="match status" value="1"/>
</dbReference>
<dbReference type="Gene3D" id="1.20.5.430">
    <property type="match status" value="1"/>
</dbReference>
<dbReference type="InterPro" id="IPR009643">
    <property type="entry name" value="HS1-bd"/>
</dbReference>
<dbReference type="PANTHER" id="PTHR19424">
    <property type="entry name" value="HEAT SHOCK FACTOR BINDING PROTEIN 1"/>
    <property type="match status" value="1"/>
</dbReference>
<dbReference type="PANTHER" id="PTHR19424:SF4">
    <property type="entry name" value="HEAT SHOCK FACTOR-BINDING PROTEIN 1-LIKE PROTEIN 1"/>
    <property type="match status" value="1"/>
</dbReference>
<dbReference type="Pfam" id="PF06825">
    <property type="entry name" value="HSBP1"/>
    <property type="match status" value="1"/>
</dbReference>
<reference key="1">
    <citation type="submission" date="2005-09" db="EMBL/GenBank/DDBJ databases">
        <authorList>
            <person name="Mural R.J."/>
            <person name="Adams M.D."/>
            <person name="Myers E.W."/>
            <person name="Smith H.O."/>
            <person name="Venter J.C."/>
        </authorList>
    </citation>
    <scope>NUCLEOTIDE SEQUENCE [LARGE SCALE GENOMIC DNA]</scope>
</reference>
<proteinExistence type="inferred from homology"/>
<accession>D4A9E1</accession>
<sequence>MDARTPEVPCGDLLQNAAENLLQEVEEHFQALTATLNLRMEEMGNRIEDLQRNVDDLMAQAGIENSIKEATT</sequence>
<name>HSBPL_RAT</name>
<comment type="similarity">
    <text evidence="2">Belongs to the HSBP1 family.</text>
</comment>
<evidence type="ECO:0000255" key="1"/>
<evidence type="ECO:0000305" key="2"/>
<feature type="chain" id="PRO_0000394664" description="Heat shock factor-binding protein 1-like protein 1">
    <location>
        <begin position="1"/>
        <end position="72"/>
    </location>
</feature>
<feature type="coiled-coil region" evidence="1">
    <location>
        <begin position="12"/>
        <end position="66"/>
    </location>
</feature>